<name>MSRB_LIGS1</name>
<accession>Q1WVT3</accession>
<dbReference type="EC" id="1.8.4.12" evidence="1"/>
<dbReference type="EMBL" id="CP000233">
    <property type="protein sequence ID" value="ABD98852.1"/>
    <property type="molecule type" value="Genomic_DNA"/>
</dbReference>
<dbReference type="RefSeq" id="WP_011475469.1">
    <property type="nucleotide sequence ID" value="NC_007929.1"/>
</dbReference>
<dbReference type="RefSeq" id="YP_534935.1">
    <property type="nucleotide sequence ID" value="NC_007929.1"/>
</dbReference>
<dbReference type="SMR" id="Q1WVT3"/>
<dbReference type="STRING" id="362948.LSL_0029"/>
<dbReference type="KEGG" id="lsl:LSL_0029"/>
<dbReference type="PATRIC" id="fig|362948.14.peg.103"/>
<dbReference type="HOGENOM" id="CLU_031040_8_5_9"/>
<dbReference type="OrthoDB" id="4174719at2"/>
<dbReference type="Proteomes" id="UP000006559">
    <property type="component" value="Chromosome"/>
</dbReference>
<dbReference type="GO" id="GO:0005737">
    <property type="term" value="C:cytoplasm"/>
    <property type="evidence" value="ECO:0007669"/>
    <property type="project" value="TreeGrafter"/>
</dbReference>
<dbReference type="GO" id="GO:0033743">
    <property type="term" value="F:peptide-methionine (R)-S-oxide reductase activity"/>
    <property type="evidence" value="ECO:0007669"/>
    <property type="project" value="UniProtKB-UniRule"/>
</dbReference>
<dbReference type="GO" id="GO:0030091">
    <property type="term" value="P:protein repair"/>
    <property type="evidence" value="ECO:0007669"/>
    <property type="project" value="InterPro"/>
</dbReference>
<dbReference type="GO" id="GO:0006979">
    <property type="term" value="P:response to oxidative stress"/>
    <property type="evidence" value="ECO:0007669"/>
    <property type="project" value="InterPro"/>
</dbReference>
<dbReference type="FunFam" id="2.170.150.20:FF:000003">
    <property type="entry name" value="Peptide methionine sulfoxide reductase MsrB"/>
    <property type="match status" value="1"/>
</dbReference>
<dbReference type="Gene3D" id="2.170.150.20">
    <property type="entry name" value="Peptide methionine sulfoxide reductase"/>
    <property type="match status" value="1"/>
</dbReference>
<dbReference type="HAMAP" id="MF_01400">
    <property type="entry name" value="MsrB"/>
    <property type="match status" value="1"/>
</dbReference>
<dbReference type="InterPro" id="IPR028427">
    <property type="entry name" value="Met_Sox_Rdtase_MsrB"/>
</dbReference>
<dbReference type="InterPro" id="IPR002579">
    <property type="entry name" value="Met_Sox_Rdtase_MsrB_dom"/>
</dbReference>
<dbReference type="InterPro" id="IPR011057">
    <property type="entry name" value="Mss4-like_sf"/>
</dbReference>
<dbReference type="NCBIfam" id="TIGR00357">
    <property type="entry name" value="peptide-methionine (R)-S-oxide reductase MsrB"/>
    <property type="match status" value="1"/>
</dbReference>
<dbReference type="PANTHER" id="PTHR10173">
    <property type="entry name" value="METHIONINE SULFOXIDE REDUCTASE"/>
    <property type="match status" value="1"/>
</dbReference>
<dbReference type="PANTHER" id="PTHR10173:SF59">
    <property type="entry name" value="PEPTIDE METHIONINE SULFOXIDE REDUCTASE MSRA_MSRB"/>
    <property type="match status" value="1"/>
</dbReference>
<dbReference type="Pfam" id="PF01641">
    <property type="entry name" value="SelR"/>
    <property type="match status" value="1"/>
</dbReference>
<dbReference type="SUPFAM" id="SSF51316">
    <property type="entry name" value="Mss4-like"/>
    <property type="match status" value="1"/>
</dbReference>
<dbReference type="PROSITE" id="PS51790">
    <property type="entry name" value="MSRB"/>
    <property type="match status" value="1"/>
</dbReference>
<feature type="chain" id="PRO_1000068276" description="Peptide methionine sulfoxide reductase MsrB">
    <location>
        <begin position="1"/>
        <end position="144"/>
    </location>
</feature>
<feature type="domain" description="MsrB" evidence="2">
    <location>
        <begin position="5"/>
        <end position="128"/>
    </location>
</feature>
<feature type="active site" description="Nucleophile" evidence="2">
    <location>
        <position position="117"/>
    </location>
</feature>
<proteinExistence type="inferred from homology"/>
<protein>
    <recommendedName>
        <fullName evidence="1">Peptide methionine sulfoxide reductase MsrB</fullName>
        <ecNumber evidence="1">1.8.4.12</ecNumber>
    </recommendedName>
    <alternativeName>
        <fullName evidence="1">Peptide-methionine (R)-S-oxide reductase</fullName>
    </alternativeName>
</protein>
<organism>
    <name type="scientific">Ligilactobacillus salivarius (strain UCC118)</name>
    <name type="common">Lactobacillus salivarius</name>
    <dbReference type="NCBI Taxonomy" id="362948"/>
    <lineage>
        <taxon>Bacteria</taxon>
        <taxon>Bacillati</taxon>
        <taxon>Bacillota</taxon>
        <taxon>Bacilli</taxon>
        <taxon>Lactobacillales</taxon>
        <taxon>Lactobacillaceae</taxon>
        <taxon>Ligilactobacillus</taxon>
    </lineage>
</organism>
<gene>
    <name evidence="1" type="primary">msrB</name>
    <name type="ordered locus">LSL_0029</name>
</gene>
<keyword id="KW-0560">Oxidoreductase</keyword>
<keyword id="KW-1185">Reference proteome</keyword>
<reference key="1">
    <citation type="journal article" date="2006" name="Proc. Natl. Acad. Sci. U.S.A.">
        <title>Multireplicon genome architecture of Lactobacillus salivarius.</title>
        <authorList>
            <person name="Claesson M.J."/>
            <person name="Li Y."/>
            <person name="Leahy S."/>
            <person name="Canchaya C."/>
            <person name="van Pijkeren J.P."/>
            <person name="Cerdeno-Tarraga A.M."/>
            <person name="Parkhill J."/>
            <person name="Flynn S."/>
            <person name="O'Sullivan G.C."/>
            <person name="Collins J.K."/>
            <person name="Higgins D."/>
            <person name="Shanahan F."/>
            <person name="Fitzgerald G.F."/>
            <person name="van Sinderen D."/>
            <person name="O'Toole P.W."/>
        </authorList>
    </citation>
    <scope>NUCLEOTIDE SEQUENCE [LARGE SCALE GENOMIC DNA]</scope>
    <source>
        <strain>UCC118</strain>
    </source>
</reference>
<evidence type="ECO:0000255" key="1">
    <source>
        <dbReference type="HAMAP-Rule" id="MF_01400"/>
    </source>
</evidence>
<evidence type="ECO:0000255" key="2">
    <source>
        <dbReference type="PROSITE-ProRule" id="PRU01126"/>
    </source>
</evidence>
<comment type="catalytic activity">
    <reaction evidence="1">
        <text>L-methionyl-[protein] + [thioredoxin]-disulfide + H2O = L-methionyl-(R)-S-oxide-[protein] + [thioredoxin]-dithiol</text>
        <dbReference type="Rhea" id="RHEA:24164"/>
        <dbReference type="Rhea" id="RHEA-COMP:10698"/>
        <dbReference type="Rhea" id="RHEA-COMP:10700"/>
        <dbReference type="Rhea" id="RHEA-COMP:12313"/>
        <dbReference type="Rhea" id="RHEA-COMP:12314"/>
        <dbReference type="ChEBI" id="CHEBI:15377"/>
        <dbReference type="ChEBI" id="CHEBI:16044"/>
        <dbReference type="ChEBI" id="CHEBI:29950"/>
        <dbReference type="ChEBI" id="CHEBI:45764"/>
        <dbReference type="ChEBI" id="CHEBI:50058"/>
        <dbReference type="EC" id="1.8.4.12"/>
    </reaction>
</comment>
<comment type="similarity">
    <text evidence="1">Belongs to the MsrB Met sulfoxide reductase family.</text>
</comment>
<sequence>MKETKEELRQRIGEEAYQVTQNAATERAFTGKYDEFFEDGIYVDVVSGEPLFSSKDKYNSGCGWPAFTQPINNRMVTNHEDNSFGMHRVEVRSRQAQSHLGHVFNDGPQDRGGLRYCINSAALQFIPVAELDEKGYGEYKKLFD</sequence>